<dbReference type="EC" id="3.5.2.7" evidence="1"/>
<dbReference type="EMBL" id="CP000480">
    <property type="protein sequence ID" value="ABK71533.1"/>
    <property type="molecule type" value="Genomic_DNA"/>
</dbReference>
<dbReference type="EMBL" id="CP001663">
    <property type="protein sequence ID" value="AFP37628.1"/>
    <property type="molecule type" value="Genomic_DNA"/>
</dbReference>
<dbReference type="RefSeq" id="WP_003892542.1">
    <property type="nucleotide sequence ID" value="NZ_SIJM01000011.1"/>
</dbReference>
<dbReference type="RefSeq" id="YP_885574.1">
    <property type="nucleotide sequence ID" value="NC_008596.1"/>
</dbReference>
<dbReference type="SMR" id="A0QRN6"/>
<dbReference type="STRING" id="246196.MSMEG_1182"/>
<dbReference type="PaxDb" id="246196-MSMEI_1151"/>
<dbReference type="KEGG" id="msb:LJ00_05890"/>
<dbReference type="KEGG" id="msg:MSMEI_1151"/>
<dbReference type="KEGG" id="msm:MSMEG_1182"/>
<dbReference type="PATRIC" id="fig|246196.19.peg.1176"/>
<dbReference type="eggNOG" id="COG1228">
    <property type="taxonomic scope" value="Bacteria"/>
</dbReference>
<dbReference type="OrthoDB" id="9776455at2"/>
<dbReference type="UniPathway" id="UPA00379">
    <property type="reaction ID" value="UER00551"/>
</dbReference>
<dbReference type="Proteomes" id="UP000000757">
    <property type="component" value="Chromosome"/>
</dbReference>
<dbReference type="Proteomes" id="UP000006158">
    <property type="component" value="Chromosome"/>
</dbReference>
<dbReference type="GO" id="GO:0005737">
    <property type="term" value="C:cytoplasm"/>
    <property type="evidence" value="ECO:0007669"/>
    <property type="project" value="UniProtKB-SubCell"/>
</dbReference>
<dbReference type="GO" id="GO:0050480">
    <property type="term" value="F:imidazolonepropionase activity"/>
    <property type="evidence" value="ECO:0007669"/>
    <property type="project" value="UniProtKB-UniRule"/>
</dbReference>
<dbReference type="GO" id="GO:0005506">
    <property type="term" value="F:iron ion binding"/>
    <property type="evidence" value="ECO:0007669"/>
    <property type="project" value="UniProtKB-UniRule"/>
</dbReference>
<dbReference type="GO" id="GO:0008270">
    <property type="term" value="F:zinc ion binding"/>
    <property type="evidence" value="ECO:0007669"/>
    <property type="project" value="UniProtKB-UniRule"/>
</dbReference>
<dbReference type="GO" id="GO:0019556">
    <property type="term" value="P:L-histidine catabolic process to glutamate and formamide"/>
    <property type="evidence" value="ECO:0007669"/>
    <property type="project" value="UniProtKB-UniPathway"/>
</dbReference>
<dbReference type="GO" id="GO:0019557">
    <property type="term" value="P:L-histidine catabolic process to glutamate and formate"/>
    <property type="evidence" value="ECO:0007669"/>
    <property type="project" value="UniProtKB-UniPathway"/>
</dbReference>
<dbReference type="CDD" id="cd01296">
    <property type="entry name" value="Imidazolone-5PH"/>
    <property type="match status" value="1"/>
</dbReference>
<dbReference type="FunFam" id="3.20.20.140:FF:000007">
    <property type="entry name" value="Imidazolonepropionase"/>
    <property type="match status" value="1"/>
</dbReference>
<dbReference type="Gene3D" id="3.20.20.140">
    <property type="entry name" value="Metal-dependent hydrolases"/>
    <property type="match status" value="1"/>
</dbReference>
<dbReference type="Gene3D" id="2.30.40.10">
    <property type="entry name" value="Urease, subunit C, domain 1"/>
    <property type="match status" value="1"/>
</dbReference>
<dbReference type="HAMAP" id="MF_00372">
    <property type="entry name" value="HutI"/>
    <property type="match status" value="1"/>
</dbReference>
<dbReference type="InterPro" id="IPR006680">
    <property type="entry name" value="Amidohydro-rel"/>
</dbReference>
<dbReference type="InterPro" id="IPR005920">
    <property type="entry name" value="HutI"/>
</dbReference>
<dbReference type="InterPro" id="IPR011059">
    <property type="entry name" value="Metal-dep_hydrolase_composite"/>
</dbReference>
<dbReference type="InterPro" id="IPR032466">
    <property type="entry name" value="Metal_Hydrolase"/>
</dbReference>
<dbReference type="NCBIfam" id="TIGR01224">
    <property type="entry name" value="hutI"/>
    <property type="match status" value="1"/>
</dbReference>
<dbReference type="PANTHER" id="PTHR42752">
    <property type="entry name" value="IMIDAZOLONEPROPIONASE"/>
    <property type="match status" value="1"/>
</dbReference>
<dbReference type="PANTHER" id="PTHR42752:SF1">
    <property type="entry name" value="IMIDAZOLONEPROPIONASE-RELATED"/>
    <property type="match status" value="1"/>
</dbReference>
<dbReference type="Pfam" id="PF01979">
    <property type="entry name" value="Amidohydro_1"/>
    <property type="match status" value="1"/>
</dbReference>
<dbReference type="SUPFAM" id="SSF51338">
    <property type="entry name" value="Composite domain of metallo-dependent hydrolases"/>
    <property type="match status" value="1"/>
</dbReference>
<dbReference type="SUPFAM" id="SSF51556">
    <property type="entry name" value="Metallo-dependent hydrolases"/>
    <property type="match status" value="1"/>
</dbReference>
<sequence length="396" mass="41331">MTTLLIDNIGSLVTNDPTLDAGPLGVLRDAAVVVEDGRIAWYGATSAAPAADTRLDAAGRAVIPGFVDSHAHLVFAGDRSEEFAARMSGTPYQAGGIRTTVTATRDATDATLKSTVTRLAAEALRSGTTTLECKSGYGLTVEQELRSLQVAAEITDEVTFMGAHVVPPEYAETPDDYVELVCTAMLDACAPAAKWVDVFCERGAFDLDQSRAILQAGIARGLQPRVHANQLGPGPGVQLAVECNAASADHVTHVSDADIAALAGSNTVATLLPAAEFSTRAAYPDGRRLIDAGVTVALSPDCNPGSSFTTNMPFCIAVAVREMHLTPDEAVWAATAGGARALRRDDVGHLAVGARADLALLDAPSHIHLAYRPGVPLVAAVLRNGEIVWQTKEVTS</sequence>
<protein>
    <recommendedName>
        <fullName evidence="1">Imidazolonepropionase</fullName>
        <ecNumber evidence="1">3.5.2.7</ecNumber>
    </recommendedName>
    <alternativeName>
        <fullName evidence="1">Imidazolone-5-propionate hydrolase</fullName>
    </alternativeName>
</protein>
<name>HUTI_MYCS2</name>
<reference key="1">
    <citation type="submission" date="2006-10" db="EMBL/GenBank/DDBJ databases">
        <authorList>
            <person name="Fleischmann R.D."/>
            <person name="Dodson R.J."/>
            <person name="Haft D.H."/>
            <person name="Merkel J.S."/>
            <person name="Nelson W.C."/>
            <person name="Fraser C.M."/>
        </authorList>
    </citation>
    <scope>NUCLEOTIDE SEQUENCE [LARGE SCALE GENOMIC DNA]</scope>
    <source>
        <strain>ATCC 700084 / mc(2)155</strain>
    </source>
</reference>
<reference key="2">
    <citation type="journal article" date="2007" name="Genome Biol.">
        <title>Interrupted coding sequences in Mycobacterium smegmatis: authentic mutations or sequencing errors?</title>
        <authorList>
            <person name="Deshayes C."/>
            <person name="Perrodou E."/>
            <person name="Gallien S."/>
            <person name="Euphrasie D."/>
            <person name="Schaeffer C."/>
            <person name="Van-Dorsselaer A."/>
            <person name="Poch O."/>
            <person name="Lecompte O."/>
            <person name="Reyrat J.-M."/>
        </authorList>
    </citation>
    <scope>NUCLEOTIDE SEQUENCE [LARGE SCALE GENOMIC DNA]</scope>
    <source>
        <strain>ATCC 700084 / mc(2)155</strain>
    </source>
</reference>
<reference key="3">
    <citation type="journal article" date="2009" name="Genome Res.">
        <title>Ortho-proteogenomics: multiple proteomes investigation through orthology and a new MS-based protocol.</title>
        <authorList>
            <person name="Gallien S."/>
            <person name="Perrodou E."/>
            <person name="Carapito C."/>
            <person name="Deshayes C."/>
            <person name="Reyrat J.-M."/>
            <person name="Van Dorsselaer A."/>
            <person name="Poch O."/>
            <person name="Schaeffer C."/>
            <person name="Lecompte O."/>
        </authorList>
    </citation>
    <scope>NUCLEOTIDE SEQUENCE [LARGE SCALE GENOMIC DNA]</scope>
    <scope>IDENTIFICATION BY MASS SPECTROMETRY [LARGE SCALE ANALYSIS]</scope>
    <scope>CLEAVAGE OF INITIATOR METHIONINE</scope>
    <source>
        <strain>ATCC 700084 / mc(2)155</strain>
    </source>
</reference>
<organism>
    <name type="scientific">Mycolicibacterium smegmatis (strain ATCC 700084 / mc(2)155)</name>
    <name type="common">Mycobacterium smegmatis</name>
    <dbReference type="NCBI Taxonomy" id="246196"/>
    <lineage>
        <taxon>Bacteria</taxon>
        <taxon>Bacillati</taxon>
        <taxon>Actinomycetota</taxon>
        <taxon>Actinomycetes</taxon>
        <taxon>Mycobacteriales</taxon>
        <taxon>Mycobacteriaceae</taxon>
        <taxon>Mycolicibacterium</taxon>
    </lineage>
</organism>
<evidence type="ECO:0000255" key="1">
    <source>
        <dbReference type="HAMAP-Rule" id="MF_00372"/>
    </source>
</evidence>
<evidence type="ECO:0000269" key="2">
    <source>
    </source>
</evidence>
<gene>
    <name evidence="1" type="primary">hutI</name>
    <name type="ordered locus">MSMEG_1182</name>
    <name type="ordered locus">MSMEI_1151</name>
</gene>
<accession>A0QRN6</accession>
<accession>I7FFI6</accession>
<keyword id="KW-0963">Cytoplasm</keyword>
<keyword id="KW-0369">Histidine metabolism</keyword>
<keyword id="KW-0378">Hydrolase</keyword>
<keyword id="KW-0408">Iron</keyword>
<keyword id="KW-0479">Metal-binding</keyword>
<keyword id="KW-1185">Reference proteome</keyword>
<keyword id="KW-0862">Zinc</keyword>
<proteinExistence type="evidence at protein level"/>
<feature type="initiator methionine" description="Removed" evidence="2">
    <location>
        <position position="1"/>
    </location>
</feature>
<feature type="chain" id="PRO_1000007143" description="Imidazolonepropionase">
    <location>
        <begin position="2"/>
        <end position="396"/>
    </location>
</feature>
<feature type="binding site" evidence="1">
    <location>
        <position position="70"/>
    </location>
    <ligand>
        <name>Fe(3+)</name>
        <dbReference type="ChEBI" id="CHEBI:29034"/>
    </ligand>
</feature>
<feature type="binding site" evidence="1">
    <location>
        <position position="70"/>
    </location>
    <ligand>
        <name>Zn(2+)</name>
        <dbReference type="ChEBI" id="CHEBI:29105"/>
    </ligand>
</feature>
<feature type="binding site" evidence="1">
    <location>
        <position position="72"/>
    </location>
    <ligand>
        <name>Fe(3+)</name>
        <dbReference type="ChEBI" id="CHEBI:29034"/>
    </ligand>
</feature>
<feature type="binding site" evidence="1">
    <location>
        <position position="72"/>
    </location>
    <ligand>
        <name>Zn(2+)</name>
        <dbReference type="ChEBI" id="CHEBI:29105"/>
    </ligand>
</feature>
<feature type="binding site" evidence="1">
    <location>
        <position position="79"/>
    </location>
    <ligand>
        <name>4-imidazolone-5-propanoate</name>
        <dbReference type="ChEBI" id="CHEBI:77893"/>
    </ligand>
</feature>
<feature type="binding site" evidence="1">
    <location>
        <position position="137"/>
    </location>
    <ligand>
        <name>4-imidazolone-5-propanoate</name>
        <dbReference type="ChEBI" id="CHEBI:77893"/>
    </ligand>
</feature>
<feature type="binding site" evidence="1">
    <location>
        <position position="137"/>
    </location>
    <ligand>
        <name>N-formimidoyl-L-glutamate</name>
        <dbReference type="ChEBI" id="CHEBI:58928"/>
    </ligand>
</feature>
<feature type="binding site" evidence="1">
    <location>
        <position position="164"/>
    </location>
    <ligand>
        <name>4-imidazolone-5-propanoate</name>
        <dbReference type="ChEBI" id="CHEBI:77893"/>
    </ligand>
</feature>
<feature type="binding site" evidence="1">
    <location>
        <position position="227"/>
    </location>
    <ligand>
        <name>Fe(3+)</name>
        <dbReference type="ChEBI" id="CHEBI:29034"/>
    </ligand>
</feature>
<feature type="binding site" evidence="1">
    <location>
        <position position="227"/>
    </location>
    <ligand>
        <name>Zn(2+)</name>
        <dbReference type="ChEBI" id="CHEBI:29105"/>
    </ligand>
</feature>
<feature type="binding site" evidence="1">
    <location>
        <position position="230"/>
    </location>
    <ligand>
        <name>4-imidazolone-5-propanoate</name>
        <dbReference type="ChEBI" id="CHEBI:77893"/>
    </ligand>
</feature>
<feature type="binding site" evidence="1">
    <location>
        <position position="301"/>
    </location>
    <ligand>
        <name>Fe(3+)</name>
        <dbReference type="ChEBI" id="CHEBI:29034"/>
    </ligand>
</feature>
<feature type="binding site" evidence="1">
    <location>
        <position position="301"/>
    </location>
    <ligand>
        <name>Zn(2+)</name>
        <dbReference type="ChEBI" id="CHEBI:29105"/>
    </ligand>
</feature>
<feature type="binding site" evidence="1">
    <location>
        <position position="303"/>
    </location>
    <ligand>
        <name>N-formimidoyl-L-glutamate</name>
        <dbReference type="ChEBI" id="CHEBI:58928"/>
    </ligand>
</feature>
<feature type="binding site" evidence="1">
    <location>
        <position position="305"/>
    </location>
    <ligand>
        <name>N-formimidoyl-L-glutamate</name>
        <dbReference type="ChEBI" id="CHEBI:58928"/>
    </ligand>
</feature>
<feature type="binding site" evidence="1">
    <location>
        <position position="306"/>
    </location>
    <ligand>
        <name>4-imidazolone-5-propanoate</name>
        <dbReference type="ChEBI" id="CHEBI:77893"/>
    </ligand>
</feature>
<comment type="function">
    <text evidence="1">Catalyzes the hydrolytic cleavage of the carbon-nitrogen bond in imidazolone-5-propanoate to yield N-formimidoyl-L-glutamate. It is the third step in the universal histidine degradation pathway.</text>
</comment>
<comment type="catalytic activity">
    <reaction evidence="1">
        <text>4-imidazolone-5-propanoate + H2O = N-formimidoyl-L-glutamate</text>
        <dbReference type="Rhea" id="RHEA:23660"/>
        <dbReference type="ChEBI" id="CHEBI:15377"/>
        <dbReference type="ChEBI" id="CHEBI:58928"/>
        <dbReference type="ChEBI" id="CHEBI:77893"/>
        <dbReference type="EC" id="3.5.2.7"/>
    </reaction>
</comment>
<comment type="cofactor">
    <cofactor evidence="1">
        <name>Zn(2+)</name>
        <dbReference type="ChEBI" id="CHEBI:29105"/>
    </cofactor>
    <cofactor evidence="1">
        <name>Fe(3+)</name>
        <dbReference type="ChEBI" id="CHEBI:29034"/>
    </cofactor>
    <text evidence="1">Binds 1 zinc or iron ion per subunit.</text>
</comment>
<comment type="pathway">
    <text evidence="1">Amino-acid degradation; L-histidine degradation into L-glutamate; N-formimidoyl-L-glutamate from L-histidine: step 3/3.</text>
</comment>
<comment type="subcellular location">
    <subcellularLocation>
        <location evidence="1">Cytoplasm</location>
    </subcellularLocation>
</comment>
<comment type="similarity">
    <text evidence="1">Belongs to the metallo-dependent hydrolases superfamily. HutI family.</text>
</comment>